<name>HUTI_CERSK</name>
<accession>B9KSW5</accession>
<keyword id="KW-0963">Cytoplasm</keyword>
<keyword id="KW-0369">Histidine metabolism</keyword>
<keyword id="KW-0378">Hydrolase</keyword>
<keyword id="KW-0408">Iron</keyword>
<keyword id="KW-0479">Metal-binding</keyword>
<keyword id="KW-0862">Zinc</keyword>
<feature type="chain" id="PRO_1000133885" description="Imidazolonepropionase">
    <location>
        <begin position="1"/>
        <end position="395"/>
    </location>
</feature>
<feature type="binding site" evidence="1">
    <location>
        <position position="63"/>
    </location>
    <ligand>
        <name>Fe(3+)</name>
        <dbReference type="ChEBI" id="CHEBI:29034"/>
    </ligand>
</feature>
<feature type="binding site" evidence="1">
    <location>
        <position position="63"/>
    </location>
    <ligand>
        <name>Zn(2+)</name>
        <dbReference type="ChEBI" id="CHEBI:29105"/>
    </ligand>
</feature>
<feature type="binding site" evidence="1">
    <location>
        <position position="65"/>
    </location>
    <ligand>
        <name>Fe(3+)</name>
        <dbReference type="ChEBI" id="CHEBI:29034"/>
    </ligand>
</feature>
<feature type="binding site" evidence="1">
    <location>
        <position position="65"/>
    </location>
    <ligand>
        <name>Zn(2+)</name>
        <dbReference type="ChEBI" id="CHEBI:29105"/>
    </ligand>
</feature>
<feature type="binding site" evidence="1">
    <location>
        <position position="72"/>
    </location>
    <ligand>
        <name>4-imidazolone-5-propanoate</name>
        <dbReference type="ChEBI" id="CHEBI:77893"/>
    </ligand>
</feature>
<feature type="binding site" evidence="1">
    <location>
        <position position="135"/>
    </location>
    <ligand>
        <name>4-imidazolone-5-propanoate</name>
        <dbReference type="ChEBI" id="CHEBI:77893"/>
    </ligand>
</feature>
<feature type="binding site" evidence="1">
    <location>
        <position position="135"/>
    </location>
    <ligand>
        <name>N-formimidoyl-L-glutamate</name>
        <dbReference type="ChEBI" id="CHEBI:58928"/>
    </ligand>
</feature>
<feature type="binding site" evidence="1">
    <location>
        <position position="168"/>
    </location>
    <ligand>
        <name>4-imidazolone-5-propanoate</name>
        <dbReference type="ChEBI" id="CHEBI:77893"/>
    </ligand>
</feature>
<feature type="binding site" evidence="1">
    <location>
        <position position="233"/>
    </location>
    <ligand>
        <name>Fe(3+)</name>
        <dbReference type="ChEBI" id="CHEBI:29034"/>
    </ligand>
</feature>
<feature type="binding site" evidence="1">
    <location>
        <position position="233"/>
    </location>
    <ligand>
        <name>Zn(2+)</name>
        <dbReference type="ChEBI" id="CHEBI:29105"/>
    </ligand>
</feature>
<feature type="binding site" evidence="1">
    <location>
        <position position="236"/>
    </location>
    <ligand>
        <name>4-imidazolone-5-propanoate</name>
        <dbReference type="ChEBI" id="CHEBI:77893"/>
    </ligand>
</feature>
<feature type="binding site" evidence="1">
    <location>
        <position position="308"/>
    </location>
    <ligand>
        <name>Fe(3+)</name>
        <dbReference type="ChEBI" id="CHEBI:29034"/>
    </ligand>
</feature>
<feature type="binding site" evidence="1">
    <location>
        <position position="308"/>
    </location>
    <ligand>
        <name>Zn(2+)</name>
        <dbReference type="ChEBI" id="CHEBI:29105"/>
    </ligand>
</feature>
<feature type="binding site" evidence="1">
    <location>
        <position position="310"/>
    </location>
    <ligand>
        <name>N-formimidoyl-L-glutamate</name>
        <dbReference type="ChEBI" id="CHEBI:58928"/>
    </ligand>
</feature>
<feature type="binding site" evidence="1">
    <location>
        <position position="312"/>
    </location>
    <ligand>
        <name>N-formimidoyl-L-glutamate</name>
        <dbReference type="ChEBI" id="CHEBI:58928"/>
    </ligand>
</feature>
<feature type="binding site" evidence="1">
    <location>
        <position position="313"/>
    </location>
    <ligand>
        <name>4-imidazolone-5-propanoate</name>
        <dbReference type="ChEBI" id="CHEBI:77893"/>
    </ligand>
</feature>
<gene>
    <name evidence="1" type="primary">hutI</name>
    <name type="ordered locus">RSKD131_1251</name>
</gene>
<organism>
    <name type="scientific">Cereibacter sphaeroides (strain KD131 / KCTC 12085)</name>
    <name type="common">Rhodobacter sphaeroides</name>
    <dbReference type="NCBI Taxonomy" id="557760"/>
    <lineage>
        <taxon>Bacteria</taxon>
        <taxon>Pseudomonadati</taxon>
        <taxon>Pseudomonadota</taxon>
        <taxon>Alphaproteobacteria</taxon>
        <taxon>Rhodobacterales</taxon>
        <taxon>Paracoccaceae</taxon>
        <taxon>Cereibacter</taxon>
    </lineage>
</organism>
<reference key="1">
    <citation type="journal article" date="2009" name="J. Bacteriol.">
        <title>Complete genome sequence of Rhodobacter sphaeroides KD131.</title>
        <authorList>
            <person name="Lim S.-K."/>
            <person name="Kim S.J."/>
            <person name="Cha S.H."/>
            <person name="Oh Y.-K."/>
            <person name="Rhee H.-J."/>
            <person name="Kim M.-S."/>
            <person name="Lee J.K."/>
        </authorList>
    </citation>
    <scope>NUCLEOTIDE SEQUENCE [LARGE SCALE GENOMIC DNA]</scope>
    <source>
        <strain>KD131 / KCTC 12085</strain>
    </source>
</reference>
<proteinExistence type="inferred from homology"/>
<comment type="function">
    <text evidence="1">Catalyzes the hydrolytic cleavage of the carbon-nitrogen bond in imidazolone-5-propanoate to yield N-formimidoyl-L-glutamate. It is the third step in the universal histidine degradation pathway.</text>
</comment>
<comment type="catalytic activity">
    <reaction evidence="1">
        <text>4-imidazolone-5-propanoate + H2O = N-formimidoyl-L-glutamate</text>
        <dbReference type="Rhea" id="RHEA:23660"/>
        <dbReference type="ChEBI" id="CHEBI:15377"/>
        <dbReference type="ChEBI" id="CHEBI:58928"/>
        <dbReference type="ChEBI" id="CHEBI:77893"/>
        <dbReference type="EC" id="3.5.2.7"/>
    </reaction>
</comment>
<comment type="cofactor">
    <cofactor evidence="1">
        <name>Zn(2+)</name>
        <dbReference type="ChEBI" id="CHEBI:29105"/>
    </cofactor>
    <cofactor evidence="1">
        <name>Fe(3+)</name>
        <dbReference type="ChEBI" id="CHEBI:29034"/>
    </cofactor>
    <text evidence="1">Binds 1 zinc or iron ion per subunit.</text>
</comment>
<comment type="pathway">
    <text evidence="1">Amino-acid degradation; L-histidine degradation into L-glutamate; N-formimidoyl-L-glutamate from L-histidine: step 3/3.</text>
</comment>
<comment type="subcellular location">
    <subcellularLocation>
        <location evidence="1">Cytoplasm</location>
    </subcellularLocation>
</comment>
<comment type="similarity">
    <text evidence="1">Belongs to the metallo-dependent hydrolases superfamily. HutI family.</text>
</comment>
<sequence length="395" mass="41314">MMILGNLRVATLSDGYGLIPDAAILIEGDRIQWVGPEAHLPPSAAPRHDMGGRLCTPALIDCHTHAVFAGTRAAEFEMRLKGASYAEVAAAGGGIVSTVMATRAASADELLAASLPRIDAMLAGGVGTVEIKSGYGLDIETELRMLRVARRIGQLRKVRVRTSFLGAHAVPPDYRGRPDAYLAEVVLPALKVAQDEGLVDAVDAFCEGIAFSPAQIAHLFAQAHKLRLPVKLHAEQLSNLGGAALAARHDALSADHLEYLDAEGVAALAAAGTVAVLLPGAFYALRETQAPPVAALRAAGVPMAVATDLNPGTSPLGALGLAMNMACTLFRLTPEEALAGTTIHAARALGLSDIGRIAPGFRADLAIWEAEHPAELSWRIGPAPLHVRLHEGEFV</sequence>
<protein>
    <recommendedName>
        <fullName evidence="1">Imidazolonepropionase</fullName>
        <ecNumber evidence="1">3.5.2.7</ecNumber>
    </recommendedName>
    <alternativeName>
        <fullName evidence="1">Imidazolone-5-propionate hydrolase</fullName>
    </alternativeName>
</protein>
<evidence type="ECO:0000255" key="1">
    <source>
        <dbReference type="HAMAP-Rule" id="MF_00372"/>
    </source>
</evidence>
<dbReference type="EC" id="3.5.2.7" evidence="1"/>
<dbReference type="EMBL" id="CP001150">
    <property type="protein sequence ID" value="ACM01111.1"/>
    <property type="molecule type" value="Genomic_DNA"/>
</dbReference>
<dbReference type="RefSeq" id="WP_015920619.1">
    <property type="nucleotide sequence ID" value="NC_011963.1"/>
</dbReference>
<dbReference type="SMR" id="B9KSW5"/>
<dbReference type="GeneID" id="67446674"/>
<dbReference type="KEGG" id="rsk:RSKD131_1251"/>
<dbReference type="HOGENOM" id="CLU_041647_0_0_5"/>
<dbReference type="UniPathway" id="UPA00379">
    <property type="reaction ID" value="UER00551"/>
</dbReference>
<dbReference type="GO" id="GO:0005737">
    <property type="term" value="C:cytoplasm"/>
    <property type="evidence" value="ECO:0007669"/>
    <property type="project" value="UniProtKB-SubCell"/>
</dbReference>
<dbReference type="GO" id="GO:0050480">
    <property type="term" value="F:imidazolonepropionase activity"/>
    <property type="evidence" value="ECO:0007669"/>
    <property type="project" value="UniProtKB-UniRule"/>
</dbReference>
<dbReference type="GO" id="GO:0005506">
    <property type="term" value="F:iron ion binding"/>
    <property type="evidence" value="ECO:0007669"/>
    <property type="project" value="UniProtKB-UniRule"/>
</dbReference>
<dbReference type="GO" id="GO:0008270">
    <property type="term" value="F:zinc ion binding"/>
    <property type="evidence" value="ECO:0007669"/>
    <property type="project" value="UniProtKB-UniRule"/>
</dbReference>
<dbReference type="GO" id="GO:0019556">
    <property type="term" value="P:L-histidine catabolic process to glutamate and formamide"/>
    <property type="evidence" value="ECO:0007669"/>
    <property type="project" value="UniProtKB-UniPathway"/>
</dbReference>
<dbReference type="GO" id="GO:0019557">
    <property type="term" value="P:L-histidine catabolic process to glutamate and formate"/>
    <property type="evidence" value="ECO:0007669"/>
    <property type="project" value="UniProtKB-UniPathway"/>
</dbReference>
<dbReference type="FunFam" id="3.20.20.140:FF:000007">
    <property type="entry name" value="Imidazolonepropionase"/>
    <property type="match status" value="1"/>
</dbReference>
<dbReference type="Gene3D" id="3.20.20.140">
    <property type="entry name" value="Metal-dependent hydrolases"/>
    <property type="match status" value="1"/>
</dbReference>
<dbReference type="Gene3D" id="2.30.40.10">
    <property type="entry name" value="Urease, subunit C, domain 1"/>
    <property type="match status" value="1"/>
</dbReference>
<dbReference type="HAMAP" id="MF_00372">
    <property type="entry name" value="HutI"/>
    <property type="match status" value="1"/>
</dbReference>
<dbReference type="InterPro" id="IPR006680">
    <property type="entry name" value="Amidohydro-rel"/>
</dbReference>
<dbReference type="InterPro" id="IPR005920">
    <property type="entry name" value="HutI"/>
</dbReference>
<dbReference type="InterPro" id="IPR011059">
    <property type="entry name" value="Metal-dep_hydrolase_composite"/>
</dbReference>
<dbReference type="InterPro" id="IPR032466">
    <property type="entry name" value="Metal_Hydrolase"/>
</dbReference>
<dbReference type="NCBIfam" id="TIGR01224">
    <property type="entry name" value="hutI"/>
    <property type="match status" value="1"/>
</dbReference>
<dbReference type="PANTHER" id="PTHR42752">
    <property type="entry name" value="IMIDAZOLONEPROPIONASE"/>
    <property type="match status" value="1"/>
</dbReference>
<dbReference type="PANTHER" id="PTHR42752:SF1">
    <property type="entry name" value="IMIDAZOLONEPROPIONASE-RELATED"/>
    <property type="match status" value="1"/>
</dbReference>
<dbReference type="Pfam" id="PF01979">
    <property type="entry name" value="Amidohydro_1"/>
    <property type="match status" value="1"/>
</dbReference>
<dbReference type="SUPFAM" id="SSF51338">
    <property type="entry name" value="Composite domain of metallo-dependent hydrolases"/>
    <property type="match status" value="1"/>
</dbReference>
<dbReference type="SUPFAM" id="SSF51556">
    <property type="entry name" value="Metallo-dependent hydrolases"/>
    <property type="match status" value="1"/>
</dbReference>